<gene>
    <name evidence="1" type="primary">rplL</name>
    <name type="ordered locus">SpyM3_0754</name>
</gene>
<accession>P0DE02</accession>
<accession>P58076</accession>
<accession>P66064</accession>
<feature type="chain" id="PRO_0000157591" description="Large ribosomal subunit protein bL12">
    <location>
        <begin position="1"/>
        <end position="121"/>
    </location>
</feature>
<dbReference type="EMBL" id="AE014074">
    <property type="protein sequence ID" value="AAM79361.1"/>
    <property type="molecule type" value="Genomic_DNA"/>
</dbReference>
<dbReference type="RefSeq" id="WP_002984819.1">
    <property type="nucleotide sequence ID" value="NC_004070.1"/>
</dbReference>
<dbReference type="SMR" id="P0DE02"/>
<dbReference type="GeneID" id="69900915"/>
<dbReference type="KEGG" id="spg:SpyM3_0754"/>
<dbReference type="HOGENOM" id="CLU_086499_3_2_9"/>
<dbReference type="Proteomes" id="UP000000564">
    <property type="component" value="Chromosome"/>
</dbReference>
<dbReference type="GO" id="GO:0022625">
    <property type="term" value="C:cytosolic large ribosomal subunit"/>
    <property type="evidence" value="ECO:0007669"/>
    <property type="project" value="TreeGrafter"/>
</dbReference>
<dbReference type="GO" id="GO:0003729">
    <property type="term" value="F:mRNA binding"/>
    <property type="evidence" value="ECO:0007669"/>
    <property type="project" value="TreeGrafter"/>
</dbReference>
<dbReference type="GO" id="GO:0003735">
    <property type="term" value="F:structural constituent of ribosome"/>
    <property type="evidence" value="ECO:0007669"/>
    <property type="project" value="InterPro"/>
</dbReference>
<dbReference type="GO" id="GO:0006412">
    <property type="term" value="P:translation"/>
    <property type="evidence" value="ECO:0007669"/>
    <property type="project" value="UniProtKB-UniRule"/>
</dbReference>
<dbReference type="CDD" id="cd00387">
    <property type="entry name" value="Ribosomal_L7_L12"/>
    <property type="match status" value="1"/>
</dbReference>
<dbReference type="FunFam" id="3.30.1390.10:FF:000001">
    <property type="entry name" value="50S ribosomal protein L7/L12"/>
    <property type="match status" value="1"/>
</dbReference>
<dbReference type="Gene3D" id="3.30.1390.10">
    <property type="match status" value="1"/>
</dbReference>
<dbReference type="Gene3D" id="1.20.5.710">
    <property type="entry name" value="Single helix bin"/>
    <property type="match status" value="1"/>
</dbReference>
<dbReference type="HAMAP" id="MF_00368">
    <property type="entry name" value="Ribosomal_bL12"/>
    <property type="match status" value="1"/>
</dbReference>
<dbReference type="InterPro" id="IPR000206">
    <property type="entry name" value="Ribosomal_bL12"/>
</dbReference>
<dbReference type="InterPro" id="IPR013823">
    <property type="entry name" value="Ribosomal_bL12_C"/>
</dbReference>
<dbReference type="InterPro" id="IPR014719">
    <property type="entry name" value="Ribosomal_bL12_C/ClpS-like"/>
</dbReference>
<dbReference type="InterPro" id="IPR008932">
    <property type="entry name" value="Ribosomal_bL12_oligo"/>
</dbReference>
<dbReference type="InterPro" id="IPR036235">
    <property type="entry name" value="Ribosomal_bL12_oligo_N_sf"/>
</dbReference>
<dbReference type="NCBIfam" id="TIGR00855">
    <property type="entry name" value="L12"/>
    <property type="match status" value="1"/>
</dbReference>
<dbReference type="PANTHER" id="PTHR45987">
    <property type="entry name" value="39S RIBOSOMAL PROTEIN L12"/>
    <property type="match status" value="1"/>
</dbReference>
<dbReference type="PANTHER" id="PTHR45987:SF4">
    <property type="entry name" value="LARGE RIBOSOMAL SUBUNIT PROTEIN BL12M"/>
    <property type="match status" value="1"/>
</dbReference>
<dbReference type="Pfam" id="PF00542">
    <property type="entry name" value="Ribosomal_L12"/>
    <property type="match status" value="1"/>
</dbReference>
<dbReference type="Pfam" id="PF16320">
    <property type="entry name" value="Ribosomal_L12_N"/>
    <property type="match status" value="1"/>
</dbReference>
<dbReference type="SUPFAM" id="SSF54736">
    <property type="entry name" value="ClpS-like"/>
    <property type="match status" value="1"/>
</dbReference>
<dbReference type="SUPFAM" id="SSF48300">
    <property type="entry name" value="Ribosomal protein L7/12, oligomerisation (N-terminal) domain"/>
    <property type="match status" value="1"/>
</dbReference>
<protein>
    <recommendedName>
        <fullName evidence="1">Large ribosomal subunit protein bL12</fullName>
    </recommendedName>
    <alternativeName>
        <fullName evidence="2">50S ribosomal protein L7/L12</fullName>
    </alternativeName>
</protein>
<evidence type="ECO:0000255" key="1">
    <source>
        <dbReference type="HAMAP-Rule" id="MF_00368"/>
    </source>
</evidence>
<evidence type="ECO:0000305" key="2"/>
<keyword id="KW-0687">Ribonucleoprotein</keyword>
<keyword id="KW-0689">Ribosomal protein</keyword>
<comment type="function">
    <text evidence="1">Forms part of the ribosomal stalk which helps the ribosome interact with GTP-bound translation factors. Is thus essential for accurate translation.</text>
</comment>
<comment type="subunit">
    <text evidence="1">Homodimer. Part of the ribosomal stalk of the 50S ribosomal subunit. Forms a multimeric L10(L12)X complex, where L10 forms an elongated spine to which 2 to 4 L12 dimers bind in a sequential fashion. Binds GTP-bound translation factors.</text>
</comment>
<comment type="similarity">
    <text evidence="1">Belongs to the bacterial ribosomal protein bL12 family.</text>
</comment>
<proteinExistence type="inferred from homology"/>
<reference key="1">
    <citation type="journal article" date="2002" name="Proc. Natl. Acad. Sci. U.S.A.">
        <title>Genome sequence of a serotype M3 strain of group A Streptococcus: phage-encoded toxins, the high-virulence phenotype, and clone emergence.</title>
        <authorList>
            <person name="Beres S.B."/>
            <person name="Sylva G.L."/>
            <person name="Barbian K.D."/>
            <person name="Lei B."/>
            <person name="Hoff J.S."/>
            <person name="Mammarella N.D."/>
            <person name="Liu M.-Y."/>
            <person name="Smoot J.C."/>
            <person name="Porcella S.F."/>
            <person name="Parkins L.D."/>
            <person name="Campbell D.S."/>
            <person name="Smith T.M."/>
            <person name="McCormick J.K."/>
            <person name="Leung D.Y.M."/>
            <person name="Schlievert P.M."/>
            <person name="Musser J.M."/>
        </authorList>
    </citation>
    <scope>NUCLEOTIDE SEQUENCE [LARGE SCALE GENOMIC DNA]</scope>
    <source>
        <strain>ATCC BAA-595 / MGAS315</strain>
    </source>
</reference>
<name>RL7_STRP3</name>
<sequence length="121" mass="12256">MALNIENIIAEIKEASILELNDLVKAIEEEFGVTAAAPVAAAAAGGAEEAAKDSFDVELTSAGDKKVGVIKAVREITGLGLKEAKGLVDGAPANVKEGVAAAEAEEIKAKLEEAGATITLK</sequence>
<organism>
    <name type="scientific">Streptococcus pyogenes serotype M3 (strain ATCC BAA-595 / MGAS315)</name>
    <dbReference type="NCBI Taxonomy" id="198466"/>
    <lineage>
        <taxon>Bacteria</taxon>
        <taxon>Bacillati</taxon>
        <taxon>Bacillota</taxon>
        <taxon>Bacilli</taxon>
        <taxon>Lactobacillales</taxon>
        <taxon>Streptococcaceae</taxon>
        <taxon>Streptococcus</taxon>
    </lineage>
</organism>